<name>PXPA_BURM7</name>
<sequence length="254" mass="26718">MEIDLNADLGEGCGSDEALLDLVTSANIACGWHAGGAQAMRDCVRWAVEKGVSIGAHPSFHDPENFGRKEMDLPASEIYAGVLYQLGALSAIAQAEGGRIAHVKPHGALYNQAAREPEIADAVVSAIHDFDPSLAVFGLAKSGFVDAAQQAGLVAVEEVFADRGYRADGSLVPRSQPGALVDDENEMLARTLEMVRGQRVRAVTGEWVPLNAQTVCLHGDGPHALAFAKRIRDALEAAGIDVHAPGALHAGERA</sequence>
<evidence type="ECO:0000255" key="1">
    <source>
        <dbReference type="HAMAP-Rule" id="MF_00691"/>
    </source>
</evidence>
<keyword id="KW-0067">ATP-binding</keyword>
<keyword id="KW-0378">Hydrolase</keyword>
<keyword id="KW-0547">Nucleotide-binding</keyword>
<organism>
    <name type="scientific">Burkholderia mallei (strain NCTC 10247)</name>
    <dbReference type="NCBI Taxonomy" id="320389"/>
    <lineage>
        <taxon>Bacteria</taxon>
        <taxon>Pseudomonadati</taxon>
        <taxon>Pseudomonadota</taxon>
        <taxon>Betaproteobacteria</taxon>
        <taxon>Burkholderiales</taxon>
        <taxon>Burkholderiaceae</taxon>
        <taxon>Burkholderia</taxon>
        <taxon>pseudomallei group</taxon>
    </lineage>
</organism>
<reference key="1">
    <citation type="journal article" date="2010" name="Genome Biol. Evol.">
        <title>Continuing evolution of Burkholderia mallei through genome reduction and large-scale rearrangements.</title>
        <authorList>
            <person name="Losada L."/>
            <person name="Ronning C.M."/>
            <person name="DeShazer D."/>
            <person name="Woods D."/>
            <person name="Fedorova N."/>
            <person name="Kim H.S."/>
            <person name="Shabalina S.A."/>
            <person name="Pearson T.R."/>
            <person name="Brinkac L."/>
            <person name="Tan P."/>
            <person name="Nandi T."/>
            <person name="Crabtree J."/>
            <person name="Badger J."/>
            <person name="Beckstrom-Sternberg S."/>
            <person name="Saqib M."/>
            <person name="Schutzer S.E."/>
            <person name="Keim P."/>
            <person name="Nierman W.C."/>
        </authorList>
    </citation>
    <scope>NUCLEOTIDE SEQUENCE [LARGE SCALE GENOMIC DNA]</scope>
    <source>
        <strain>NCTC 10247</strain>
    </source>
</reference>
<proteinExistence type="inferred from homology"/>
<gene>
    <name evidence="1" type="primary">pxpA</name>
    <name type="ordered locus">BMA10247_3370</name>
</gene>
<comment type="function">
    <text evidence="1">Catalyzes the cleavage of 5-oxoproline to form L-glutamate coupled to the hydrolysis of ATP to ADP and inorganic phosphate.</text>
</comment>
<comment type="catalytic activity">
    <reaction evidence="1">
        <text>5-oxo-L-proline + ATP + 2 H2O = L-glutamate + ADP + phosphate + H(+)</text>
        <dbReference type="Rhea" id="RHEA:10348"/>
        <dbReference type="ChEBI" id="CHEBI:15377"/>
        <dbReference type="ChEBI" id="CHEBI:15378"/>
        <dbReference type="ChEBI" id="CHEBI:29985"/>
        <dbReference type="ChEBI" id="CHEBI:30616"/>
        <dbReference type="ChEBI" id="CHEBI:43474"/>
        <dbReference type="ChEBI" id="CHEBI:58402"/>
        <dbReference type="ChEBI" id="CHEBI:456216"/>
        <dbReference type="EC" id="3.5.2.9"/>
    </reaction>
</comment>
<comment type="subunit">
    <text evidence="1">Forms a complex composed of PxpA, PxpB and PxpC.</text>
</comment>
<comment type="similarity">
    <text evidence="1">Belongs to the LamB/PxpA family.</text>
</comment>
<feature type="chain" id="PRO_1000045189" description="5-oxoprolinase subunit A">
    <location>
        <begin position="1"/>
        <end position="254"/>
    </location>
</feature>
<accession>A3MRJ9</accession>
<dbReference type="EC" id="3.5.2.9" evidence="1"/>
<dbReference type="EMBL" id="CP000548">
    <property type="protein sequence ID" value="ABO05258.1"/>
    <property type="molecule type" value="Genomic_DNA"/>
</dbReference>
<dbReference type="RefSeq" id="WP_004197223.1">
    <property type="nucleotide sequence ID" value="NZ_CP007802.1"/>
</dbReference>
<dbReference type="SMR" id="A3MRJ9"/>
<dbReference type="GeneID" id="92980979"/>
<dbReference type="KEGG" id="bmaz:BM44_9"/>
<dbReference type="KEGG" id="bmn:BMA10247_3370"/>
<dbReference type="PATRIC" id="fig|320389.8.peg.9"/>
<dbReference type="GO" id="GO:0017168">
    <property type="term" value="F:5-oxoprolinase (ATP-hydrolyzing) activity"/>
    <property type="evidence" value="ECO:0007669"/>
    <property type="project" value="UniProtKB-UniRule"/>
</dbReference>
<dbReference type="GO" id="GO:0005524">
    <property type="term" value="F:ATP binding"/>
    <property type="evidence" value="ECO:0007669"/>
    <property type="project" value="UniProtKB-UniRule"/>
</dbReference>
<dbReference type="GO" id="GO:0005975">
    <property type="term" value="P:carbohydrate metabolic process"/>
    <property type="evidence" value="ECO:0007669"/>
    <property type="project" value="InterPro"/>
</dbReference>
<dbReference type="CDD" id="cd10800">
    <property type="entry name" value="LamB_YcsF_YbgL_like"/>
    <property type="match status" value="1"/>
</dbReference>
<dbReference type="Gene3D" id="3.20.20.370">
    <property type="entry name" value="Glycoside hydrolase/deacetylase"/>
    <property type="match status" value="1"/>
</dbReference>
<dbReference type="HAMAP" id="MF_00691">
    <property type="entry name" value="PxpA"/>
    <property type="match status" value="1"/>
</dbReference>
<dbReference type="InterPro" id="IPR011330">
    <property type="entry name" value="Glyco_hydro/deAcase_b/a-brl"/>
</dbReference>
<dbReference type="InterPro" id="IPR005501">
    <property type="entry name" value="LamB/YcsF/PxpA-like"/>
</dbReference>
<dbReference type="NCBIfam" id="NF003812">
    <property type="entry name" value="PRK05406.1-1"/>
    <property type="match status" value="1"/>
</dbReference>
<dbReference type="NCBIfam" id="NF003814">
    <property type="entry name" value="PRK05406.1-3"/>
    <property type="match status" value="1"/>
</dbReference>
<dbReference type="NCBIfam" id="NF003815">
    <property type="entry name" value="PRK05406.1-4"/>
    <property type="match status" value="1"/>
</dbReference>
<dbReference type="NCBIfam" id="NF003816">
    <property type="entry name" value="PRK05406.1-5"/>
    <property type="match status" value="1"/>
</dbReference>
<dbReference type="PANTHER" id="PTHR30292:SF0">
    <property type="entry name" value="5-OXOPROLINASE SUBUNIT A"/>
    <property type="match status" value="1"/>
</dbReference>
<dbReference type="PANTHER" id="PTHR30292">
    <property type="entry name" value="UNCHARACTERIZED PROTEIN YBGL-RELATED"/>
    <property type="match status" value="1"/>
</dbReference>
<dbReference type="Pfam" id="PF03746">
    <property type="entry name" value="LamB_YcsF"/>
    <property type="match status" value="1"/>
</dbReference>
<dbReference type="SUPFAM" id="SSF88713">
    <property type="entry name" value="Glycoside hydrolase/deacetylase"/>
    <property type="match status" value="1"/>
</dbReference>
<protein>
    <recommendedName>
        <fullName evidence="1">5-oxoprolinase subunit A</fullName>
        <shortName evidence="1">5-OPase subunit A</shortName>
        <ecNumber evidence="1">3.5.2.9</ecNumber>
    </recommendedName>
    <alternativeName>
        <fullName evidence="1">5-oxoprolinase (ATP-hydrolyzing) subunit A</fullName>
    </alternativeName>
</protein>